<reference key="1">
    <citation type="submission" date="2001-12" db="EMBL/GenBank/DDBJ databases">
        <title>Macaca fascicularis NKG2D NK receptor.</title>
        <authorList>
            <person name="Biassoni R."/>
        </authorList>
    </citation>
    <scope>NUCLEOTIDE SEQUENCE [MRNA]</scope>
    <source>
        <tissue>Natural killer cell</tissue>
    </source>
</reference>
<comment type="function">
    <text evidence="1">Functions as an activating and costimulatory receptor involved in immunosurveillance upon binding to various cellular stress-inducible ligands displayed at the surface of autologous tumor cells and virus-infected cells. Provides both stimulatory and costimulatory innate immune responses on activated killer (NK) cells, leading to cytotoxic activity. Acts as a costimulatory receptor for T-cell receptor (TCR) in CD8(+) T-cell-mediated adaptive immune responses by amplifying T-cell activation. Stimulates perforin-mediated elimination of ligand-expressing tumor cells. Signaling involves calcium influx, culminating in the expression of TNF-alpha. Participates in NK cell-mediated bone marrow graft rejection. May play a regulatory role in differentiation and survival of NK cells. Binds to ligands belonging to various subfamilies of MHC class I-related glycoproteins (By similarity).</text>
</comment>
<comment type="subunit">
    <text evidence="1 2">Homodimer; disulfide-linked. Heterohexamer composed of two subunits of KLRK1 and four subunits of HCST/DAP10. Interacts (via transmembrane domain) with HCST/DAP10 (via transmembrane domain); the interaction is required for KLRK1 NK cell surface and induces NK cell-mediated cytotoxicity. Can form disulfide-bonded heterodimer with CD94 (By similarity). Interacts with CEACAM1; recruits PTPN6 that dephosphorylates VAV1 (By similarity).</text>
</comment>
<comment type="subcellular location">
    <subcellularLocation>
        <location evidence="1">Cell membrane</location>
        <topology evidence="1">Single-pass type II membrane protein</topology>
    </subcellularLocation>
    <text evidence="1">Colocalized with HCST on the cell surface.</text>
</comment>
<comment type="tissue specificity">
    <text>Natural killer cells.</text>
</comment>
<comment type="miscellaneous">
    <text evidence="1">Is not capable of signal transduction by itself, but operates through the adapter protein HCST.</text>
</comment>
<gene>
    <name type="primary">KLRK1</name>
    <name type="synonym">NKG2D</name>
</gene>
<sequence>MGWIRGRRPRHNLEMSEFHNYKLGLAKSDFSTRCQKQRCPVIKSKCRENASPLFFCCFIAVAMGIRFIIMVTIWSAVFLNSLFNQEVQIPLTESYCGPCPKNWICYKNNCYQFFNESKNWYESQASCMSQNASLLKVYSKEDQDLLKLVKSYHWMGLVHIPTNGSWQWEDGSILSPNLLTIIEMQKGDCALYASSFKGYIENCSIPNTYICMQRTV</sequence>
<accession>P61252</accession>
<name>NKG2D_MACFA</name>
<keyword id="KW-1064">Adaptive immunity</keyword>
<keyword id="KW-1003">Cell membrane</keyword>
<keyword id="KW-0221">Differentiation</keyword>
<keyword id="KW-1015">Disulfide bond</keyword>
<keyword id="KW-0325">Glycoprotein</keyword>
<keyword id="KW-0391">Immunity</keyword>
<keyword id="KW-0399">Innate immunity</keyword>
<keyword id="KW-0430">Lectin</keyword>
<keyword id="KW-0472">Membrane</keyword>
<keyword id="KW-0675">Receptor</keyword>
<keyword id="KW-1185">Reference proteome</keyword>
<keyword id="KW-0735">Signal-anchor</keyword>
<keyword id="KW-0812">Transmembrane</keyword>
<keyword id="KW-1133">Transmembrane helix</keyword>
<feature type="chain" id="PRO_0000046666" description="NKG2-D type II integral membrane protein">
    <location>
        <begin position="1"/>
        <end position="216"/>
    </location>
</feature>
<feature type="topological domain" description="Cytoplasmic" evidence="3">
    <location>
        <begin position="1"/>
        <end position="51"/>
    </location>
</feature>
<feature type="transmembrane region" description="Helical; Signal-anchor for type II membrane protein" evidence="3">
    <location>
        <begin position="52"/>
        <end position="72"/>
    </location>
</feature>
<feature type="topological domain" description="Extracellular" evidence="3">
    <location>
        <begin position="73"/>
        <end position="216"/>
    </location>
</feature>
<feature type="domain" description="C-type lectin" evidence="4">
    <location>
        <begin position="98"/>
        <end position="213"/>
    </location>
</feature>
<feature type="glycosylation site" description="N-linked (GlcNAc...) asparagine" evidence="3">
    <location>
        <position position="115"/>
    </location>
</feature>
<feature type="glycosylation site" description="N-linked (GlcNAc...) asparagine" evidence="3">
    <location>
        <position position="131"/>
    </location>
</feature>
<feature type="glycosylation site" description="N-linked (GlcNAc...) asparagine" evidence="3">
    <location>
        <position position="163"/>
    </location>
</feature>
<feature type="glycosylation site" description="N-linked (GlcNAc...) asparagine" evidence="3">
    <location>
        <position position="202"/>
    </location>
</feature>
<feature type="disulfide bond" evidence="4">
    <location>
        <begin position="96"/>
        <end position="105"/>
    </location>
</feature>
<feature type="disulfide bond" evidence="4">
    <location>
        <begin position="99"/>
        <end position="110"/>
    </location>
</feature>
<feature type="disulfide bond" evidence="4">
    <location>
        <begin position="127"/>
        <end position="211"/>
    </location>
</feature>
<feature type="disulfide bond" evidence="4">
    <location>
        <begin position="189"/>
        <end position="203"/>
    </location>
</feature>
<proteinExistence type="evidence at transcript level"/>
<evidence type="ECO:0000250" key="1"/>
<evidence type="ECO:0000250" key="2">
    <source>
        <dbReference type="UniProtKB" id="P26718"/>
    </source>
</evidence>
<evidence type="ECO:0000255" key="3"/>
<evidence type="ECO:0000255" key="4">
    <source>
        <dbReference type="PROSITE-ProRule" id="PRU00040"/>
    </source>
</evidence>
<organism>
    <name type="scientific">Macaca fascicularis</name>
    <name type="common">Crab-eating macaque</name>
    <name type="synonym">Cynomolgus monkey</name>
    <dbReference type="NCBI Taxonomy" id="9541"/>
    <lineage>
        <taxon>Eukaryota</taxon>
        <taxon>Metazoa</taxon>
        <taxon>Chordata</taxon>
        <taxon>Craniata</taxon>
        <taxon>Vertebrata</taxon>
        <taxon>Euteleostomi</taxon>
        <taxon>Mammalia</taxon>
        <taxon>Eutheria</taxon>
        <taxon>Euarchontoglires</taxon>
        <taxon>Primates</taxon>
        <taxon>Haplorrhini</taxon>
        <taxon>Catarrhini</taxon>
        <taxon>Cercopithecidae</taxon>
        <taxon>Cercopithecinae</taxon>
        <taxon>Macaca</taxon>
    </lineage>
</organism>
<protein>
    <recommendedName>
        <fullName>NKG2-D type II integral membrane protein</fullName>
    </recommendedName>
    <alternativeName>
        <fullName>Killer cell lectin-like receptor subfamily K member 1</fullName>
    </alternativeName>
    <alternativeName>
        <fullName>NK cell receptor D</fullName>
    </alternativeName>
    <alternativeName>
        <fullName>NKG2-D-activating NK receptor</fullName>
    </alternativeName>
    <cdAntigenName>CD314</cdAntigenName>
</protein>
<dbReference type="EMBL" id="AJ426429">
    <property type="protein sequence ID" value="CAD19993.1"/>
    <property type="molecule type" value="mRNA"/>
</dbReference>
<dbReference type="RefSeq" id="NP_001270213.1">
    <property type="nucleotide sequence ID" value="NM_001283284.1"/>
</dbReference>
<dbReference type="RefSeq" id="XP_015285653.1">
    <property type="nucleotide sequence ID" value="XM_015430167.3"/>
</dbReference>
<dbReference type="SMR" id="P61252"/>
<dbReference type="STRING" id="9541.ENSMFAP00000018915"/>
<dbReference type="GlyCosmos" id="P61252">
    <property type="glycosylation" value="4 sites, No reported glycans"/>
</dbReference>
<dbReference type="ABCD" id="P61252">
    <property type="antibodies" value="36 sequenced antibodies"/>
</dbReference>
<dbReference type="Ensembl" id="ENSMFAT00000087397.1">
    <property type="protein sequence ID" value="ENSMFAP00000059183.1"/>
    <property type="gene ID" value="ENSMFAG00000032496.2"/>
</dbReference>
<dbReference type="GeneID" id="102120479"/>
<dbReference type="KEGG" id="mcf:102120479"/>
<dbReference type="CTD" id="22914"/>
<dbReference type="VEuPathDB" id="HostDB:ENSMFAG00000032496"/>
<dbReference type="eggNOG" id="KOG4297">
    <property type="taxonomic scope" value="Eukaryota"/>
</dbReference>
<dbReference type="GeneTree" id="ENSGT00940000154558"/>
<dbReference type="OMA" id="DRWAHHS"/>
<dbReference type="OrthoDB" id="1626at314294"/>
<dbReference type="Proteomes" id="UP000233100">
    <property type="component" value="Chromosome 11"/>
</dbReference>
<dbReference type="Bgee" id="ENSMFAG00000032496">
    <property type="expression patterns" value="Expressed in lymph node and 7 other cell types or tissues"/>
</dbReference>
<dbReference type="GO" id="GO:0009986">
    <property type="term" value="C:cell surface"/>
    <property type="evidence" value="ECO:0000250"/>
    <property type="project" value="UniProtKB"/>
</dbReference>
<dbReference type="GO" id="GO:0009897">
    <property type="term" value="C:external side of plasma membrane"/>
    <property type="evidence" value="ECO:0007669"/>
    <property type="project" value="Ensembl"/>
</dbReference>
<dbReference type="GO" id="GO:0030246">
    <property type="term" value="F:carbohydrate binding"/>
    <property type="evidence" value="ECO:0007669"/>
    <property type="project" value="UniProtKB-KW"/>
</dbReference>
<dbReference type="GO" id="GO:0042802">
    <property type="term" value="F:identical protein binding"/>
    <property type="evidence" value="ECO:0007669"/>
    <property type="project" value="Ensembl"/>
</dbReference>
<dbReference type="GO" id="GO:0042288">
    <property type="term" value="F:MHC class I protein binding"/>
    <property type="evidence" value="ECO:0007669"/>
    <property type="project" value="Ensembl"/>
</dbReference>
<dbReference type="GO" id="GO:0032394">
    <property type="term" value="F:MHC class Ib receptor activity"/>
    <property type="evidence" value="ECO:0007669"/>
    <property type="project" value="Ensembl"/>
</dbReference>
<dbReference type="GO" id="GO:0002250">
    <property type="term" value="P:adaptive immune response"/>
    <property type="evidence" value="ECO:0007669"/>
    <property type="project" value="UniProtKB-KW"/>
</dbReference>
<dbReference type="GO" id="GO:0030154">
    <property type="term" value="P:cell differentiation"/>
    <property type="evidence" value="ECO:0007669"/>
    <property type="project" value="UniProtKB-KW"/>
</dbReference>
<dbReference type="GO" id="GO:0071222">
    <property type="term" value="P:cellular response to lipopolysaccharide"/>
    <property type="evidence" value="ECO:0007669"/>
    <property type="project" value="Ensembl"/>
</dbReference>
<dbReference type="GO" id="GO:0050830">
    <property type="term" value="P:defense response to Gram-positive bacterium"/>
    <property type="evidence" value="ECO:0007669"/>
    <property type="project" value="Ensembl"/>
</dbReference>
<dbReference type="GO" id="GO:0030101">
    <property type="term" value="P:natural killer cell activation"/>
    <property type="evidence" value="ECO:0007669"/>
    <property type="project" value="Ensembl"/>
</dbReference>
<dbReference type="GO" id="GO:0042267">
    <property type="term" value="P:natural killer cell mediated cytotoxicity"/>
    <property type="evidence" value="ECO:0007669"/>
    <property type="project" value="Ensembl"/>
</dbReference>
<dbReference type="GO" id="GO:2000502">
    <property type="term" value="P:negative regulation of natural killer cell chemotaxis"/>
    <property type="evidence" value="ECO:0007669"/>
    <property type="project" value="Ensembl"/>
</dbReference>
<dbReference type="GO" id="GO:0006809">
    <property type="term" value="P:nitric oxide biosynthetic process"/>
    <property type="evidence" value="ECO:0007669"/>
    <property type="project" value="Ensembl"/>
</dbReference>
<dbReference type="GO" id="GO:0045954">
    <property type="term" value="P:positive regulation of natural killer cell mediated cytotoxicity"/>
    <property type="evidence" value="ECO:0000250"/>
    <property type="project" value="UniProtKB"/>
</dbReference>
<dbReference type="GO" id="GO:0045429">
    <property type="term" value="P:positive regulation of nitric oxide biosynthetic process"/>
    <property type="evidence" value="ECO:0007669"/>
    <property type="project" value="Ensembl"/>
</dbReference>
<dbReference type="GO" id="GO:0032729">
    <property type="term" value="P:positive regulation of type II interferon production"/>
    <property type="evidence" value="ECO:0007669"/>
    <property type="project" value="Ensembl"/>
</dbReference>
<dbReference type="GO" id="GO:0002223">
    <property type="term" value="P:stimulatory C-type lectin receptor signaling pathway"/>
    <property type="evidence" value="ECO:0007669"/>
    <property type="project" value="Ensembl"/>
</dbReference>
<dbReference type="CDD" id="cd03593">
    <property type="entry name" value="CLECT_NK_receptors_like"/>
    <property type="match status" value="1"/>
</dbReference>
<dbReference type="FunFam" id="3.10.100.10:FF:000055">
    <property type="entry name" value="NKG2-D type II integral membrane protein"/>
    <property type="match status" value="1"/>
</dbReference>
<dbReference type="Gene3D" id="3.10.100.10">
    <property type="entry name" value="Mannose-Binding Protein A, subunit A"/>
    <property type="match status" value="1"/>
</dbReference>
<dbReference type="InterPro" id="IPR001304">
    <property type="entry name" value="C-type_lectin-like"/>
</dbReference>
<dbReference type="InterPro" id="IPR016186">
    <property type="entry name" value="C-type_lectin-like/link_sf"/>
</dbReference>
<dbReference type="InterPro" id="IPR016187">
    <property type="entry name" value="CTDL_fold"/>
</dbReference>
<dbReference type="InterPro" id="IPR042169">
    <property type="entry name" value="NKG2D"/>
</dbReference>
<dbReference type="InterPro" id="IPR033992">
    <property type="entry name" value="NKR-like_CTLD"/>
</dbReference>
<dbReference type="PANTHER" id="PTHR47494">
    <property type="entry name" value="NKG2-D TYPE II INTEGRAL MEMBRANE PROTEIN"/>
    <property type="match status" value="1"/>
</dbReference>
<dbReference type="PANTHER" id="PTHR47494:SF1">
    <property type="entry name" value="NKG2-D TYPE II INTEGRAL MEMBRANE PROTEIN"/>
    <property type="match status" value="1"/>
</dbReference>
<dbReference type="Pfam" id="PF00059">
    <property type="entry name" value="Lectin_C"/>
    <property type="match status" value="1"/>
</dbReference>
<dbReference type="SMART" id="SM00034">
    <property type="entry name" value="CLECT"/>
    <property type="match status" value="1"/>
</dbReference>
<dbReference type="SUPFAM" id="SSF56436">
    <property type="entry name" value="C-type lectin-like"/>
    <property type="match status" value="1"/>
</dbReference>
<dbReference type="PROSITE" id="PS50041">
    <property type="entry name" value="C_TYPE_LECTIN_2"/>
    <property type="match status" value="1"/>
</dbReference>